<feature type="chain" id="PRO_1000164349" description="Undecaprenyl-phosphate 4-deoxy-4-formamido-L-arabinose transferase">
    <location>
        <begin position="1"/>
        <end position="322"/>
    </location>
</feature>
<feature type="topological domain" description="Cytoplasmic" evidence="1">
    <location>
        <begin position="1"/>
        <end position="235"/>
    </location>
</feature>
<feature type="transmembrane region" description="Helical" evidence="1">
    <location>
        <begin position="236"/>
        <end position="256"/>
    </location>
</feature>
<feature type="topological domain" description="Periplasmic" evidence="1">
    <location>
        <begin position="257"/>
        <end position="269"/>
    </location>
</feature>
<feature type="transmembrane region" description="Helical" evidence="1">
    <location>
        <begin position="270"/>
        <end position="290"/>
    </location>
</feature>
<feature type="topological domain" description="Cytoplasmic" evidence="1">
    <location>
        <begin position="291"/>
        <end position="322"/>
    </location>
</feature>
<comment type="function">
    <text evidence="1">Catalyzes the transfer of 4-deoxy-4-formamido-L-arabinose from UDP to undecaprenyl phosphate. The modified arabinose is attached to lipid A and is required for resistance to polymyxin and cationic antimicrobial peptides.</text>
</comment>
<comment type="catalytic activity">
    <reaction evidence="1">
        <text>UDP-4-deoxy-4-formamido-beta-L-arabinose + di-trans,octa-cis-undecaprenyl phosphate = 4-deoxy-4-formamido-alpha-L-arabinopyranosyl di-trans,octa-cis-undecaprenyl phosphate + UDP</text>
        <dbReference type="Rhea" id="RHEA:27722"/>
        <dbReference type="ChEBI" id="CHEBI:58223"/>
        <dbReference type="ChEBI" id="CHEBI:58709"/>
        <dbReference type="ChEBI" id="CHEBI:58909"/>
        <dbReference type="ChEBI" id="CHEBI:60392"/>
        <dbReference type="EC" id="2.4.2.53"/>
    </reaction>
</comment>
<comment type="pathway">
    <text evidence="1">Glycolipid biosynthesis; 4-amino-4-deoxy-alpha-L-arabinose undecaprenyl phosphate biosynthesis; 4-amino-4-deoxy-alpha-L-arabinose undecaprenyl phosphate from UDP-4-deoxy-4-formamido-beta-L-arabinose and undecaprenyl phosphate: step 1/2.</text>
</comment>
<comment type="pathway">
    <text evidence="1">Bacterial outer membrane biogenesis; lipopolysaccharide biosynthesis.</text>
</comment>
<comment type="subcellular location">
    <subcellularLocation>
        <location evidence="1">Cell inner membrane</location>
        <topology evidence="1">Multi-pass membrane protein</topology>
    </subcellularLocation>
</comment>
<comment type="similarity">
    <text evidence="1">Belongs to the glycosyltransferase 2 family.</text>
</comment>
<dbReference type="EC" id="2.4.2.53" evidence="1"/>
<dbReference type="EMBL" id="CU928145">
    <property type="protein sequence ID" value="CAU98369.1"/>
    <property type="molecule type" value="Genomic_DNA"/>
</dbReference>
<dbReference type="RefSeq" id="WP_000461657.1">
    <property type="nucleotide sequence ID" value="NC_011748.1"/>
</dbReference>
<dbReference type="SMR" id="B7LAR9"/>
<dbReference type="CAZy" id="GT2">
    <property type="family name" value="Glycosyltransferase Family 2"/>
</dbReference>
<dbReference type="GeneID" id="93774920"/>
<dbReference type="KEGG" id="eck:EC55989_2500"/>
<dbReference type="HOGENOM" id="CLU_033536_0_0_6"/>
<dbReference type="UniPathway" id="UPA00030"/>
<dbReference type="UniPathway" id="UPA00036">
    <property type="reaction ID" value="UER00495"/>
</dbReference>
<dbReference type="Proteomes" id="UP000000746">
    <property type="component" value="Chromosome"/>
</dbReference>
<dbReference type="GO" id="GO:0005886">
    <property type="term" value="C:plasma membrane"/>
    <property type="evidence" value="ECO:0007669"/>
    <property type="project" value="UniProtKB-SubCell"/>
</dbReference>
<dbReference type="GO" id="GO:0016780">
    <property type="term" value="F:phosphotransferase activity, for other substituted phosphate groups"/>
    <property type="evidence" value="ECO:0007669"/>
    <property type="project" value="UniProtKB-UniRule"/>
</dbReference>
<dbReference type="GO" id="GO:0099621">
    <property type="term" value="F:undecaprenyl-phosphate 4-deoxy-4-formamido-L-arabinose transferase activity"/>
    <property type="evidence" value="ECO:0007669"/>
    <property type="project" value="UniProtKB-EC"/>
</dbReference>
<dbReference type="GO" id="GO:0036108">
    <property type="term" value="P:4-amino-4-deoxy-alpha-L-arabinopyranosyl undecaprenyl phosphate biosynthetic process"/>
    <property type="evidence" value="ECO:0007669"/>
    <property type="project" value="UniProtKB-UniRule"/>
</dbReference>
<dbReference type="GO" id="GO:0009245">
    <property type="term" value="P:lipid A biosynthetic process"/>
    <property type="evidence" value="ECO:0007669"/>
    <property type="project" value="UniProtKB-UniRule"/>
</dbReference>
<dbReference type="GO" id="GO:0009103">
    <property type="term" value="P:lipopolysaccharide biosynthetic process"/>
    <property type="evidence" value="ECO:0007669"/>
    <property type="project" value="UniProtKB-UniRule"/>
</dbReference>
<dbReference type="GO" id="GO:0046677">
    <property type="term" value="P:response to antibiotic"/>
    <property type="evidence" value="ECO:0007669"/>
    <property type="project" value="UniProtKB-KW"/>
</dbReference>
<dbReference type="CDD" id="cd04187">
    <property type="entry name" value="DPM1_like_bac"/>
    <property type="match status" value="1"/>
</dbReference>
<dbReference type="FunFam" id="3.90.550.10:FF:000019">
    <property type="entry name" value="Undecaprenyl-phosphate 4-deoxy-4-formamido-L-arabinose transferase"/>
    <property type="match status" value="1"/>
</dbReference>
<dbReference type="Gene3D" id="3.90.550.10">
    <property type="entry name" value="Spore Coat Polysaccharide Biosynthesis Protein SpsA, Chain A"/>
    <property type="match status" value="1"/>
</dbReference>
<dbReference type="HAMAP" id="MF_01164">
    <property type="entry name" value="ArnC_transfer"/>
    <property type="match status" value="1"/>
</dbReference>
<dbReference type="InterPro" id="IPR022857">
    <property type="entry name" value="ArnC_tfrase"/>
</dbReference>
<dbReference type="InterPro" id="IPR001173">
    <property type="entry name" value="Glyco_trans_2-like"/>
</dbReference>
<dbReference type="InterPro" id="IPR050256">
    <property type="entry name" value="Glycosyltransferase_2"/>
</dbReference>
<dbReference type="InterPro" id="IPR029044">
    <property type="entry name" value="Nucleotide-diphossugar_trans"/>
</dbReference>
<dbReference type="NCBIfam" id="NF007986">
    <property type="entry name" value="PRK10714.1"/>
    <property type="match status" value="1"/>
</dbReference>
<dbReference type="PANTHER" id="PTHR48090:SF3">
    <property type="entry name" value="UNDECAPRENYL-PHOSPHATE 4-DEOXY-4-FORMAMIDO-L-ARABINOSE TRANSFERASE"/>
    <property type="match status" value="1"/>
</dbReference>
<dbReference type="PANTHER" id="PTHR48090">
    <property type="entry name" value="UNDECAPRENYL-PHOSPHATE 4-DEOXY-4-FORMAMIDO-L-ARABINOSE TRANSFERASE-RELATED"/>
    <property type="match status" value="1"/>
</dbReference>
<dbReference type="Pfam" id="PF00535">
    <property type="entry name" value="Glycos_transf_2"/>
    <property type="match status" value="1"/>
</dbReference>
<dbReference type="SUPFAM" id="SSF53448">
    <property type="entry name" value="Nucleotide-diphospho-sugar transferases"/>
    <property type="match status" value="1"/>
</dbReference>
<proteinExistence type="inferred from homology"/>
<organism>
    <name type="scientific">Escherichia coli (strain 55989 / EAEC)</name>
    <dbReference type="NCBI Taxonomy" id="585055"/>
    <lineage>
        <taxon>Bacteria</taxon>
        <taxon>Pseudomonadati</taxon>
        <taxon>Pseudomonadota</taxon>
        <taxon>Gammaproteobacteria</taxon>
        <taxon>Enterobacterales</taxon>
        <taxon>Enterobacteriaceae</taxon>
        <taxon>Escherichia</taxon>
    </lineage>
</organism>
<keyword id="KW-0046">Antibiotic resistance</keyword>
<keyword id="KW-0997">Cell inner membrane</keyword>
<keyword id="KW-1003">Cell membrane</keyword>
<keyword id="KW-0328">Glycosyltransferase</keyword>
<keyword id="KW-0441">Lipid A biosynthesis</keyword>
<keyword id="KW-0444">Lipid biosynthesis</keyword>
<keyword id="KW-0443">Lipid metabolism</keyword>
<keyword id="KW-0448">Lipopolysaccharide biosynthesis</keyword>
<keyword id="KW-0472">Membrane</keyword>
<keyword id="KW-1185">Reference proteome</keyword>
<keyword id="KW-0808">Transferase</keyword>
<keyword id="KW-0812">Transmembrane</keyword>
<keyword id="KW-1133">Transmembrane helix</keyword>
<sequence length="322" mass="36339">MFEIHPVKKVSVVIPVYNEQESLPELIRRTTTACESLGKEYEILLIDDGSSDNSAHMLVEASQAENSHIVSILLNRNYGQHSAIMAGFSHVTGDLIITLDADLQNPPEEIPRLVAKADEGYDVVGTVRQNRQDSWFRKTASKMINRLIQRTTGKAMGDYGCMLRAYRRHIVDAMLHCHERSTFIPILANIFARRAIEIPVHHAEREFGESKYSFMRLINLMYDLVTCLTTTPLRMLSLLGSIIAIGGFSIAVLLVILRLTFGPQWAAEGVFMLFAVLFTFIGAQFIGMGLLGEYIGRIYTDVRARPRYFVQQVIRPSSKENE</sequence>
<evidence type="ECO:0000255" key="1">
    <source>
        <dbReference type="HAMAP-Rule" id="MF_01164"/>
    </source>
</evidence>
<gene>
    <name evidence="1" type="primary">arnC</name>
    <name type="ordered locus">EC55989_2500</name>
</gene>
<reference key="1">
    <citation type="journal article" date="2009" name="PLoS Genet.">
        <title>Organised genome dynamics in the Escherichia coli species results in highly diverse adaptive paths.</title>
        <authorList>
            <person name="Touchon M."/>
            <person name="Hoede C."/>
            <person name="Tenaillon O."/>
            <person name="Barbe V."/>
            <person name="Baeriswyl S."/>
            <person name="Bidet P."/>
            <person name="Bingen E."/>
            <person name="Bonacorsi S."/>
            <person name="Bouchier C."/>
            <person name="Bouvet O."/>
            <person name="Calteau A."/>
            <person name="Chiapello H."/>
            <person name="Clermont O."/>
            <person name="Cruveiller S."/>
            <person name="Danchin A."/>
            <person name="Diard M."/>
            <person name="Dossat C."/>
            <person name="Karoui M.E."/>
            <person name="Frapy E."/>
            <person name="Garry L."/>
            <person name="Ghigo J.M."/>
            <person name="Gilles A.M."/>
            <person name="Johnson J."/>
            <person name="Le Bouguenec C."/>
            <person name="Lescat M."/>
            <person name="Mangenot S."/>
            <person name="Martinez-Jehanne V."/>
            <person name="Matic I."/>
            <person name="Nassif X."/>
            <person name="Oztas S."/>
            <person name="Petit M.A."/>
            <person name="Pichon C."/>
            <person name="Rouy Z."/>
            <person name="Ruf C.S."/>
            <person name="Schneider D."/>
            <person name="Tourret J."/>
            <person name="Vacherie B."/>
            <person name="Vallenet D."/>
            <person name="Medigue C."/>
            <person name="Rocha E.P.C."/>
            <person name="Denamur E."/>
        </authorList>
    </citation>
    <scope>NUCLEOTIDE SEQUENCE [LARGE SCALE GENOMIC DNA]</scope>
    <source>
        <strain>55989 / EAEC</strain>
    </source>
</reference>
<protein>
    <recommendedName>
        <fullName evidence="1">Undecaprenyl-phosphate 4-deoxy-4-formamido-L-arabinose transferase</fullName>
        <ecNumber evidence="1">2.4.2.53</ecNumber>
    </recommendedName>
    <alternativeName>
        <fullName evidence="1">Undecaprenyl-phosphate Ara4FN transferase</fullName>
        <shortName evidence="1">Ara4FN transferase</shortName>
    </alternativeName>
</protein>
<name>ARNC_ECO55</name>
<accession>B7LAR9</accession>